<protein>
    <recommendedName>
        <fullName evidence="1">CinA-like protein</fullName>
    </recommendedName>
</protein>
<dbReference type="EMBL" id="CP000580">
    <property type="protein sequence ID" value="ABN98517.1"/>
    <property type="molecule type" value="Genomic_DNA"/>
</dbReference>
<dbReference type="SMR" id="A3Q040"/>
<dbReference type="KEGG" id="mjl:Mjls_2737"/>
<dbReference type="HOGENOM" id="CLU_030805_9_2_11"/>
<dbReference type="BioCyc" id="MSP164757:G1G8C-2756-MONOMER"/>
<dbReference type="CDD" id="cd00885">
    <property type="entry name" value="cinA"/>
    <property type="match status" value="1"/>
</dbReference>
<dbReference type="Gene3D" id="3.90.950.20">
    <property type="entry name" value="CinA-like"/>
    <property type="match status" value="1"/>
</dbReference>
<dbReference type="Gene3D" id="3.40.980.10">
    <property type="entry name" value="MoaB/Mog-like domain"/>
    <property type="match status" value="1"/>
</dbReference>
<dbReference type="HAMAP" id="MF_00226_B">
    <property type="entry name" value="CinA_B"/>
    <property type="match status" value="1"/>
</dbReference>
<dbReference type="InterPro" id="IPR050101">
    <property type="entry name" value="CinA"/>
</dbReference>
<dbReference type="InterPro" id="IPR036653">
    <property type="entry name" value="CinA-like_C"/>
</dbReference>
<dbReference type="InterPro" id="IPR008136">
    <property type="entry name" value="CinA_C"/>
</dbReference>
<dbReference type="InterPro" id="IPR008135">
    <property type="entry name" value="Competence-induced_CinA"/>
</dbReference>
<dbReference type="InterPro" id="IPR036425">
    <property type="entry name" value="MoaB/Mog-like_dom_sf"/>
</dbReference>
<dbReference type="InterPro" id="IPR001453">
    <property type="entry name" value="MoaB/Mog_dom"/>
</dbReference>
<dbReference type="NCBIfam" id="TIGR00200">
    <property type="entry name" value="cinA_nterm"/>
    <property type="match status" value="1"/>
</dbReference>
<dbReference type="NCBIfam" id="TIGR00199">
    <property type="entry name" value="PncC_domain"/>
    <property type="match status" value="1"/>
</dbReference>
<dbReference type="NCBIfam" id="NF001813">
    <property type="entry name" value="PRK00549.1"/>
    <property type="match status" value="1"/>
</dbReference>
<dbReference type="PANTHER" id="PTHR13939">
    <property type="entry name" value="NICOTINAMIDE-NUCLEOTIDE AMIDOHYDROLASE PNCC"/>
    <property type="match status" value="1"/>
</dbReference>
<dbReference type="PANTHER" id="PTHR13939:SF0">
    <property type="entry name" value="NMN AMIDOHYDROLASE-LIKE PROTEIN YFAY"/>
    <property type="match status" value="1"/>
</dbReference>
<dbReference type="Pfam" id="PF02464">
    <property type="entry name" value="CinA"/>
    <property type="match status" value="1"/>
</dbReference>
<dbReference type="Pfam" id="PF00994">
    <property type="entry name" value="MoCF_biosynth"/>
    <property type="match status" value="1"/>
</dbReference>
<dbReference type="PIRSF" id="PIRSF006728">
    <property type="entry name" value="CinA"/>
    <property type="match status" value="1"/>
</dbReference>
<dbReference type="SMART" id="SM00852">
    <property type="entry name" value="MoCF_biosynth"/>
    <property type="match status" value="1"/>
</dbReference>
<dbReference type="SUPFAM" id="SSF142433">
    <property type="entry name" value="CinA-like"/>
    <property type="match status" value="1"/>
</dbReference>
<dbReference type="SUPFAM" id="SSF53218">
    <property type="entry name" value="Molybdenum cofactor biosynthesis proteins"/>
    <property type="match status" value="1"/>
</dbReference>
<proteinExistence type="inferred from homology"/>
<organism>
    <name type="scientific">Mycobacterium sp. (strain JLS)</name>
    <dbReference type="NCBI Taxonomy" id="164757"/>
    <lineage>
        <taxon>Bacteria</taxon>
        <taxon>Bacillati</taxon>
        <taxon>Actinomycetota</taxon>
        <taxon>Actinomycetes</taxon>
        <taxon>Mycobacteriales</taxon>
        <taxon>Mycobacteriaceae</taxon>
        <taxon>Mycobacterium</taxon>
    </lineage>
</organism>
<gene>
    <name type="ordered locus">Mjls_2737</name>
</gene>
<reference key="1">
    <citation type="submission" date="2007-02" db="EMBL/GenBank/DDBJ databases">
        <title>Complete sequence of Mycobacterium sp. JLS.</title>
        <authorList>
            <consortium name="US DOE Joint Genome Institute"/>
            <person name="Copeland A."/>
            <person name="Lucas S."/>
            <person name="Lapidus A."/>
            <person name="Barry K."/>
            <person name="Detter J.C."/>
            <person name="Glavina del Rio T."/>
            <person name="Hammon N."/>
            <person name="Israni S."/>
            <person name="Dalin E."/>
            <person name="Tice H."/>
            <person name="Pitluck S."/>
            <person name="Chain P."/>
            <person name="Malfatti S."/>
            <person name="Shin M."/>
            <person name="Vergez L."/>
            <person name="Schmutz J."/>
            <person name="Larimer F."/>
            <person name="Land M."/>
            <person name="Hauser L."/>
            <person name="Kyrpides N."/>
            <person name="Mikhailova N."/>
            <person name="Miller C.D."/>
            <person name="Anderson A.J."/>
            <person name="Sims R.C."/>
            <person name="Richardson P."/>
        </authorList>
    </citation>
    <scope>NUCLEOTIDE SEQUENCE [LARGE SCALE GENOMIC DNA]</scope>
    <source>
        <strain>JLS</strain>
    </source>
</reference>
<accession>A3Q040</accession>
<comment type="similarity">
    <text evidence="1">Belongs to the CinA family.</text>
</comment>
<evidence type="ECO:0000255" key="1">
    <source>
        <dbReference type="HAMAP-Rule" id="MF_00226"/>
    </source>
</evidence>
<name>CINAL_MYCSJ</name>
<sequence length="421" mass="44805">MSARAGIIVTGTEVLTGRVQDRNGPWIADRLLELGVELAHITICGDRPADIEAQLRFLAAEGVDLIVTSGGLGPTADDLTVATVARFCGRELILDTELEQRIADILRRLMGRRTDVDFDALRAANRKQAMVPDGATVLEPVGTAPGVVVPGSPTVLVLPGPPRELQPMWRTAVQTEALRSAIAGRTEYRQDMVRMFGLPESGLAETLRDAERDLAGFDRLEITTCLRRGELEIVTRYEPDAEPVYRNLLTLLRDRHGSAIFSEDGSLVDDQVAALLAGHTIATAESCTGGMLSARLTERAGSSAYVAGAAVCYADAAKVELLGVPADLIADHGAVSEPVAEAMADGALRRFGADVAVAITGIAGPGGGTELKPVGTVCFCVRRADGRVVTRTVRLPGDRSDVRERSTTVAMHLLRRALQDG</sequence>
<feature type="chain" id="PRO_0000336509" description="CinA-like protein">
    <location>
        <begin position="1"/>
        <end position="421"/>
    </location>
</feature>